<feature type="chain" id="PRO_1000096332" description="Phosphoglycerate kinase">
    <location>
        <begin position="1"/>
        <end position="398"/>
    </location>
</feature>
<feature type="binding site" evidence="1">
    <location>
        <begin position="23"/>
        <end position="25"/>
    </location>
    <ligand>
        <name>substrate</name>
    </ligand>
</feature>
<feature type="binding site" evidence="1">
    <location>
        <position position="38"/>
    </location>
    <ligand>
        <name>substrate</name>
    </ligand>
</feature>
<feature type="binding site" evidence="1">
    <location>
        <begin position="61"/>
        <end position="64"/>
    </location>
    <ligand>
        <name>substrate</name>
    </ligand>
</feature>
<feature type="binding site" evidence="1">
    <location>
        <position position="122"/>
    </location>
    <ligand>
        <name>substrate</name>
    </ligand>
</feature>
<feature type="binding site" evidence="1">
    <location>
        <position position="155"/>
    </location>
    <ligand>
        <name>substrate</name>
    </ligand>
</feature>
<feature type="binding site" evidence="1">
    <location>
        <position position="206"/>
    </location>
    <ligand>
        <name>ATP</name>
        <dbReference type="ChEBI" id="CHEBI:30616"/>
    </ligand>
</feature>
<feature type="binding site" evidence="1">
    <location>
        <position position="297"/>
    </location>
    <ligand>
        <name>ATP</name>
        <dbReference type="ChEBI" id="CHEBI:30616"/>
    </ligand>
</feature>
<feature type="binding site" evidence="1">
    <location>
        <position position="328"/>
    </location>
    <ligand>
        <name>ATP</name>
        <dbReference type="ChEBI" id="CHEBI:30616"/>
    </ligand>
</feature>
<feature type="binding site" evidence="1">
    <location>
        <begin position="354"/>
        <end position="357"/>
    </location>
    <ligand>
        <name>ATP</name>
        <dbReference type="ChEBI" id="CHEBI:30616"/>
    </ligand>
</feature>
<evidence type="ECO:0000255" key="1">
    <source>
        <dbReference type="HAMAP-Rule" id="MF_00145"/>
    </source>
</evidence>
<comment type="catalytic activity">
    <reaction evidence="1">
        <text>(2R)-3-phosphoglycerate + ATP = (2R)-3-phospho-glyceroyl phosphate + ADP</text>
        <dbReference type="Rhea" id="RHEA:14801"/>
        <dbReference type="ChEBI" id="CHEBI:30616"/>
        <dbReference type="ChEBI" id="CHEBI:57604"/>
        <dbReference type="ChEBI" id="CHEBI:58272"/>
        <dbReference type="ChEBI" id="CHEBI:456216"/>
        <dbReference type="EC" id="2.7.2.3"/>
    </reaction>
</comment>
<comment type="pathway">
    <text evidence="1">Carbohydrate degradation; glycolysis; pyruvate from D-glyceraldehyde 3-phosphate: step 2/5.</text>
</comment>
<comment type="subunit">
    <text evidence="1">Monomer.</text>
</comment>
<comment type="subcellular location">
    <subcellularLocation>
        <location evidence="1">Cytoplasm</location>
    </subcellularLocation>
</comment>
<comment type="similarity">
    <text evidence="1">Belongs to the phosphoglycerate kinase family.</text>
</comment>
<name>PGK_CLOBK</name>
<reference key="1">
    <citation type="journal article" date="2007" name="PLoS ONE">
        <title>Analysis of the neurotoxin complex genes in Clostridium botulinum A1-A4 and B1 strains: BoNT/A3, /Ba4 and /B1 clusters are located within plasmids.</title>
        <authorList>
            <person name="Smith T.J."/>
            <person name="Hill K.K."/>
            <person name="Foley B.T."/>
            <person name="Detter J.C."/>
            <person name="Munk A.C."/>
            <person name="Bruce D.C."/>
            <person name="Doggett N.A."/>
            <person name="Smith L.A."/>
            <person name="Marks J.D."/>
            <person name="Xie G."/>
            <person name="Brettin T.S."/>
        </authorList>
    </citation>
    <scope>NUCLEOTIDE SEQUENCE [LARGE SCALE GENOMIC DNA]</scope>
    <source>
        <strain>Okra / Type B1</strain>
    </source>
</reference>
<proteinExistence type="inferred from homology"/>
<organism>
    <name type="scientific">Clostridium botulinum (strain Okra / Type B1)</name>
    <dbReference type="NCBI Taxonomy" id="498213"/>
    <lineage>
        <taxon>Bacteria</taxon>
        <taxon>Bacillati</taxon>
        <taxon>Bacillota</taxon>
        <taxon>Clostridia</taxon>
        <taxon>Eubacteriales</taxon>
        <taxon>Clostridiaceae</taxon>
        <taxon>Clostridium</taxon>
    </lineage>
</organism>
<dbReference type="EC" id="2.7.2.3" evidence="1"/>
<dbReference type="EMBL" id="CP000939">
    <property type="protein sequence ID" value="ACA43599.1"/>
    <property type="molecule type" value="Genomic_DNA"/>
</dbReference>
<dbReference type="RefSeq" id="WP_003399035.1">
    <property type="nucleotide sequence ID" value="NC_010516.1"/>
</dbReference>
<dbReference type="SMR" id="B1IDB6"/>
<dbReference type="KEGG" id="cbb:CLD_0548"/>
<dbReference type="HOGENOM" id="CLU_025427_0_2_9"/>
<dbReference type="UniPathway" id="UPA00109">
    <property type="reaction ID" value="UER00185"/>
</dbReference>
<dbReference type="Proteomes" id="UP000008541">
    <property type="component" value="Chromosome"/>
</dbReference>
<dbReference type="GO" id="GO:0005829">
    <property type="term" value="C:cytosol"/>
    <property type="evidence" value="ECO:0007669"/>
    <property type="project" value="TreeGrafter"/>
</dbReference>
<dbReference type="GO" id="GO:0043531">
    <property type="term" value="F:ADP binding"/>
    <property type="evidence" value="ECO:0007669"/>
    <property type="project" value="TreeGrafter"/>
</dbReference>
<dbReference type="GO" id="GO:0005524">
    <property type="term" value="F:ATP binding"/>
    <property type="evidence" value="ECO:0007669"/>
    <property type="project" value="UniProtKB-KW"/>
</dbReference>
<dbReference type="GO" id="GO:0004618">
    <property type="term" value="F:phosphoglycerate kinase activity"/>
    <property type="evidence" value="ECO:0007669"/>
    <property type="project" value="UniProtKB-UniRule"/>
</dbReference>
<dbReference type="GO" id="GO:0006094">
    <property type="term" value="P:gluconeogenesis"/>
    <property type="evidence" value="ECO:0007669"/>
    <property type="project" value="TreeGrafter"/>
</dbReference>
<dbReference type="GO" id="GO:0006096">
    <property type="term" value="P:glycolytic process"/>
    <property type="evidence" value="ECO:0007669"/>
    <property type="project" value="UniProtKB-UniRule"/>
</dbReference>
<dbReference type="CDD" id="cd00318">
    <property type="entry name" value="Phosphoglycerate_kinase"/>
    <property type="match status" value="1"/>
</dbReference>
<dbReference type="FunFam" id="3.40.50.1260:FF:000007">
    <property type="entry name" value="Phosphoglycerate kinase"/>
    <property type="match status" value="1"/>
</dbReference>
<dbReference type="FunFam" id="3.40.50.1260:FF:000008">
    <property type="entry name" value="Phosphoglycerate kinase"/>
    <property type="match status" value="1"/>
</dbReference>
<dbReference type="Gene3D" id="3.40.50.1260">
    <property type="entry name" value="Phosphoglycerate kinase, N-terminal domain"/>
    <property type="match status" value="2"/>
</dbReference>
<dbReference type="HAMAP" id="MF_00145">
    <property type="entry name" value="Phosphoglyc_kinase"/>
    <property type="match status" value="1"/>
</dbReference>
<dbReference type="InterPro" id="IPR001576">
    <property type="entry name" value="Phosphoglycerate_kinase"/>
</dbReference>
<dbReference type="InterPro" id="IPR015911">
    <property type="entry name" value="Phosphoglycerate_kinase_CS"/>
</dbReference>
<dbReference type="InterPro" id="IPR015824">
    <property type="entry name" value="Phosphoglycerate_kinase_N"/>
</dbReference>
<dbReference type="InterPro" id="IPR036043">
    <property type="entry name" value="Phosphoglycerate_kinase_sf"/>
</dbReference>
<dbReference type="PANTHER" id="PTHR11406">
    <property type="entry name" value="PHOSPHOGLYCERATE KINASE"/>
    <property type="match status" value="1"/>
</dbReference>
<dbReference type="PANTHER" id="PTHR11406:SF23">
    <property type="entry name" value="PHOSPHOGLYCERATE KINASE 1, CHLOROPLASTIC-RELATED"/>
    <property type="match status" value="1"/>
</dbReference>
<dbReference type="Pfam" id="PF00162">
    <property type="entry name" value="PGK"/>
    <property type="match status" value="1"/>
</dbReference>
<dbReference type="PIRSF" id="PIRSF000724">
    <property type="entry name" value="Pgk"/>
    <property type="match status" value="1"/>
</dbReference>
<dbReference type="PRINTS" id="PR00477">
    <property type="entry name" value="PHGLYCKINASE"/>
</dbReference>
<dbReference type="SUPFAM" id="SSF53748">
    <property type="entry name" value="Phosphoglycerate kinase"/>
    <property type="match status" value="1"/>
</dbReference>
<dbReference type="PROSITE" id="PS00111">
    <property type="entry name" value="PGLYCERATE_KINASE"/>
    <property type="match status" value="1"/>
</dbReference>
<sequence length="398" mass="43004">MNYNKKSIEDIDVKGKKVLVRCDFNVPLNEGKITDENRLVGALPTIKYLMGKGAKIILCSHMGKPKGEPKKELSLLPVAKRLSEMLNKEVIFADDDNVVGENAKRAVEDMKDGDVVLLQNTRYRKEETKNEEVFSKELASLADVFVNDAFGTAHRAHCSTVGVTNYLKEAACGYLIQKELKFLGNAVEKPERPFVAILGGAKVSDKINVINNLLDKVDTLIIGGGMGYTFLKAQGYTIGNSLVEEDKVEYSKEMIDKAKEKGVNLLLPIDNVVADKFDKDASPVVTEDQNIGEGYMGLDIGPKTAKIYSDAIKSAKTVVWNGPMGVFEFKSFANGTIEVAKAMADSDAVTIIGGGDSAAAVNILGFGDKMTHISTGGGASLEFLEGKELPGIAALNDK</sequence>
<keyword id="KW-0067">ATP-binding</keyword>
<keyword id="KW-0963">Cytoplasm</keyword>
<keyword id="KW-0324">Glycolysis</keyword>
<keyword id="KW-0418">Kinase</keyword>
<keyword id="KW-0547">Nucleotide-binding</keyword>
<keyword id="KW-0808">Transferase</keyword>
<gene>
    <name evidence="1" type="primary">pgk</name>
    <name type="ordered locus">CLD_0548</name>
</gene>
<protein>
    <recommendedName>
        <fullName evidence="1">Phosphoglycerate kinase</fullName>
        <ecNumber evidence="1">2.7.2.3</ecNumber>
    </recommendedName>
</protein>
<accession>B1IDB6</accession>